<organism>
    <name type="scientific">Encephalitozoon cuniculi (strain GB-M1)</name>
    <name type="common">Microsporidian parasite</name>
    <dbReference type="NCBI Taxonomy" id="284813"/>
    <lineage>
        <taxon>Eukaryota</taxon>
        <taxon>Fungi</taxon>
        <taxon>Fungi incertae sedis</taxon>
        <taxon>Microsporidia</taxon>
        <taxon>Unikaryonidae</taxon>
        <taxon>Encephalitozoon</taxon>
    </lineage>
</organism>
<proteinExistence type="evidence at protein level"/>
<keyword id="KW-0963">Cytoplasm</keyword>
<keyword id="KW-0325">Glycoprotein</keyword>
<keyword id="KW-0336">GPI-anchor</keyword>
<keyword id="KW-0449">Lipoprotein</keyword>
<keyword id="KW-0472">Membrane</keyword>
<keyword id="KW-1185">Reference proteome</keyword>
<keyword id="KW-0732">Signal</keyword>
<gene>
    <name type="primary">SWP3</name>
    <name type="synonym">EnP2</name>
    <name type="ordered locus">ECU01_1270</name>
</gene>
<sequence>MVRRSLYFLAVMGVVRSSSGLYIPSVVLQELGIASSQGCLMIAETNNGNFGIVSSGLENPVYITESPQGHREVSWQPVRGEDRAVPIYAPSAEEVRESISSVRGSEPGQYIAPQPTGFVPASTPVFGTIESASTAGAAVPVEGVFVASTENPASTGSSSTSTCPPKGTAGTTDNKGKAGGAAADDKSKSSSSSSSKKKKKGAKSLVALGAVATTALFSIVM</sequence>
<feature type="signal peptide" evidence="1">
    <location>
        <begin position="1"/>
        <end position="20"/>
    </location>
</feature>
<feature type="chain" id="PRO_0000377528" description="Spore wall protein 3">
    <location>
        <begin position="21"/>
        <end position="192"/>
    </location>
</feature>
<feature type="propeptide" id="PRO_0000377529" description="Removed in mature form" evidence="1">
    <location>
        <begin position="193"/>
        <end position="221"/>
    </location>
</feature>
<feature type="region of interest" description="Disordered" evidence="2">
    <location>
        <begin position="150"/>
        <end position="203"/>
    </location>
</feature>
<feature type="compositionally biased region" description="Low complexity" evidence="2">
    <location>
        <begin position="154"/>
        <end position="173"/>
    </location>
</feature>
<feature type="lipid moiety-binding region" description="GPI-anchor amidated serine" evidence="1">
    <location>
        <position position="192"/>
    </location>
</feature>
<evidence type="ECO:0000255" key="1"/>
<evidence type="ECO:0000256" key="2">
    <source>
        <dbReference type="SAM" id="MobiDB-lite"/>
    </source>
</evidence>
<evidence type="ECO:0000269" key="3">
    <source>
    </source>
</evidence>
<evidence type="ECO:0000269" key="4">
    <source>
    </source>
</evidence>
<evidence type="ECO:0000269" key="5">
    <source>
    </source>
</evidence>
<reference key="1">
    <citation type="journal article" date="2001" name="Genome Res.">
        <title>Sequence and analysis of chromosome I of the amitochondriate intracellular parasite Encephalitozoon cuniculi (Microspora).</title>
        <authorList>
            <person name="Peyret P."/>
            <person name="Katinka M.D."/>
            <person name="Duprat S."/>
            <person name="Duffieux F."/>
            <person name="Barbe V."/>
            <person name="Barbazanges M."/>
            <person name="Weissenbach J."/>
            <person name="Saurin W."/>
            <person name="Vivares C.P."/>
        </authorList>
    </citation>
    <scope>NUCLEOTIDE SEQUENCE [LARGE SCALE GENOMIC DNA]</scope>
    <source>
        <strain>GB-M1</strain>
    </source>
</reference>
<reference key="2">
    <citation type="journal article" date="2001" name="Nature">
        <title>Genome sequence and gene compaction of the eukaryote parasite Encephalitozoon cuniculi.</title>
        <authorList>
            <person name="Katinka M.D."/>
            <person name="Duprat S."/>
            <person name="Cornillot E."/>
            <person name="Metenier G."/>
            <person name="Thomarat F."/>
            <person name="Prensier G."/>
            <person name="Barbe V."/>
            <person name="Peyretaillade E."/>
            <person name="Brottier P."/>
            <person name="Wincker P."/>
            <person name="Delbac F."/>
            <person name="El Alaoui H."/>
            <person name="Peyret P."/>
            <person name="Saurin W."/>
            <person name="Gouy M."/>
            <person name="Weissenbach J."/>
            <person name="Vivares C.P."/>
        </authorList>
    </citation>
    <scope>NUCLEOTIDE SEQUENCE [LARGE SCALE GENOMIC DNA]</scope>
    <source>
        <strain>GB-M1</strain>
    </source>
</reference>
<reference key="3">
    <citation type="journal article" date="2006" name="Infect. Immun.">
        <title>Identification of a new spore wall protein from Encephalitozoon cuniculi.</title>
        <authorList>
            <person name="Xu Y."/>
            <person name="Takvorian P.M."/>
            <person name="Cali A."/>
            <person name="Wang F."/>
            <person name="Zhang H.S."/>
            <person name="Orr G.A."/>
            <person name="Weiss L.M."/>
        </authorList>
    </citation>
    <scope>IDENTIFICATION BY MASS SPECTROMETRY</scope>
    <scope>SUBCELLULAR LOCATION</scope>
</reference>
<reference key="4">
    <citation type="journal article" date="2006" name="Int. J. Parasitol.">
        <title>EnP1 and EnP2, two proteins associated with the Encephalitozoon cuniculi endospore, the chitin-rich inner layer of the microsporidian spore wall.</title>
        <authorList>
            <person name="Peuvel-Fanget I."/>
            <person name="Polonais V."/>
            <person name="Brosson D."/>
            <person name="Texier C."/>
            <person name="Kuhn L."/>
            <person name="Peyret P."/>
            <person name="Vivares C.P."/>
            <person name="Delbac F."/>
        </authorList>
    </citation>
    <scope>IDENTIFICATION BY MASS SPECTROMETRY</scope>
    <scope>SUBCELLULAR LOCATION</scope>
    <scope>DEVELOPMENTAL STAGE</scope>
</reference>
<reference key="5">
    <citation type="journal article" date="2006" name="Proteomics">
        <title>Proteomic analysis of the eukaryotic parasite Encephalitozoon cuniculi (microsporidia): a reference map for proteins expressed in late sporogonial stages.</title>
        <authorList>
            <person name="Brosson D."/>
            <person name="Kuhn L."/>
            <person name="Delbac F."/>
            <person name="Garin J."/>
            <person name="Vivares C.P."/>
            <person name="Texier C."/>
        </authorList>
    </citation>
    <scope>IDENTIFICATION BY MASS SPECTROMETRY [LARGE SCALE ANALYSIS]</scope>
    <scope>DEVELOPMENTAL STAGE</scope>
</reference>
<dbReference type="EMBL" id="AL391737">
    <property type="protein sequence ID" value="CAD25000.1"/>
    <property type="molecule type" value="Genomic_DNA"/>
</dbReference>
<dbReference type="RefSeq" id="XP_965965.1">
    <property type="nucleotide sequence ID" value="XM_960872.1"/>
</dbReference>
<dbReference type="VEuPathDB" id="MicrosporidiaDB:ECU01_1270"/>
<dbReference type="HOGENOM" id="CLU_1245344_0_0_1"/>
<dbReference type="InParanoid" id="Q8SWI4"/>
<dbReference type="OrthoDB" id="2195673at2759"/>
<dbReference type="Proteomes" id="UP000000819">
    <property type="component" value="Chromosome I"/>
</dbReference>
<dbReference type="GO" id="GO:0005737">
    <property type="term" value="C:cytoplasm"/>
    <property type="evidence" value="ECO:0007669"/>
    <property type="project" value="UniProtKB-SubCell"/>
</dbReference>
<dbReference type="GO" id="GO:0098552">
    <property type="term" value="C:side of membrane"/>
    <property type="evidence" value="ECO:0007669"/>
    <property type="project" value="UniProtKB-KW"/>
</dbReference>
<dbReference type="GO" id="GO:0031160">
    <property type="term" value="C:spore wall"/>
    <property type="evidence" value="ECO:0000314"/>
    <property type="project" value="CACAO"/>
</dbReference>
<comment type="function">
    <text>Spore wall component.</text>
</comment>
<comment type="subcellular location">
    <subcellularLocation>
        <location evidence="3 4">Spore wall</location>
    </subcellularLocation>
    <subcellularLocation>
        <location evidence="3 4">Membrane</location>
        <topology>Lipid-anchor</topology>
        <topology>GPI-anchor</topology>
    </subcellularLocation>
    <subcellularLocation>
        <location evidence="4">Cytoplasm</location>
    </subcellularLocation>
    <text evidence="3">Is found in the cytoplasm during the proliferative and early sporogonic stages before localizing to cell surface and spore wall in sporonts and spores.</text>
</comment>
<comment type="developmental stage">
    <text evidence="3 5">Expressed during all sporogonic stages.</text>
</comment>
<name>SWP3_ENCCU</name>
<accession>Q8SWI4</accession>
<protein>
    <recommendedName>
        <fullName>Spore wall protein 3</fullName>
    </recommendedName>
</protein>